<dbReference type="EMBL" id="AF285631">
    <property type="protein sequence ID" value="AAG00522.1"/>
    <property type="molecule type" value="mRNA"/>
</dbReference>
<dbReference type="RefSeq" id="NP_113913.1">
    <property type="nucleotide sequence ID" value="NM_031725.1"/>
</dbReference>
<dbReference type="FunCoup" id="Q9ET20">
    <property type="interactions" value="891"/>
</dbReference>
<dbReference type="STRING" id="10116.ENSRNOP00000024980"/>
<dbReference type="PhosphoSitePlus" id="Q9ET20"/>
<dbReference type="jPOST" id="Q9ET20"/>
<dbReference type="PaxDb" id="10116-ENSRNOP00000024980"/>
<dbReference type="GeneID" id="65170"/>
<dbReference type="KEGG" id="rno:65170"/>
<dbReference type="UCSC" id="RGD:68354">
    <property type="organism name" value="rat"/>
</dbReference>
<dbReference type="AGR" id="RGD:68354"/>
<dbReference type="CTD" id="113178"/>
<dbReference type="RGD" id="68354">
    <property type="gene designation" value="Scamp4"/>
</dbReference>
<dbReference type="eggNOG" id="KOG3088">
    <property type="taxonomic scope" value="Eukaryota"/>
</dbReference>
<dbReference type="InParanoid" id="Q9ET20"/>
<dbReference type="PhylomeDB" id="Q9ET20"/>
<dbReference type="PRO" id="PR:Q9ET20"/>
<dbReference type="Proteomes" id="UP000002494">
    <property type="component" value="Unplaced"/>
</dbReference>
<dbReference type="GO" id="GO:0055038">
    <property type="term" value="C:recycling endosome membrane"/>
    <property type="evidence" value="ECO:0000318"/>
    <property type="project" value="GO_Central"/>
</dbReference>
<dbReference type="GO" id="GO:0032588">
    <property type="term" value="C:trans-Golgi network membrane"/>
    <property type="evidence" value="ECO:0000318"/>
    <property type="project" value="GO_Central"/>
</dbReference>
<dbReference type="GO" id="GO:0015031">
    <property type="term" value="P:protein transport"/>
    <property type="evidence" value="ECO:0000318"/>
    <property type="project" value="GO_Central"/>
</dbReference>
<dbReference type="GO" id="GO:0019098">
    <property type="term" value="P:reproductive behavior"/>
    <property type="evidence" value="ECO:0000303"/>
    <property type="project" value="RGD"/>
</dbReference>
<dbReference type="InterPro" id="IPR007273">
    <property type="entry name" value="SCAMP"/>
</dbReference>
<dbReference type="PANTHER" id="PTHR10687:SF11">
    <property type="entry name" value="SECRETORY CARRIER-ASSOCIATED MEMBRANE PROTEIN 4"/>
    <property type="match status" value="1"/>
</dbReference>
<dbReference type="PANTHER" id="PTHR10687">
    <property type="entry name" value="SECRETORY CARRIER-ASSOCIATED MEMBRANE PROTEIN SCAMP"/>
    <property type="match status" value="1"/>
</dbReference>
<dbReference type="Pfam" id="PF04144">
    <property type="entry name" value="SCAMP"/>
    <property type="match status" value="1"/>
</dbReference>
<gene>
    <name type="primary">Scamp4</name>
</gene>
<protein>
    <recommendedName>
        <fullName>Secretory carrier-associated membrane protein 4</fullName>
        <shortName>SCAMP-4</shortName>
        <shortName>Secretory carrier membrane protein 4</shortName>
    </recommendedName>
</protein>
<proteinExistence type="evidence at transcript level"/>
<evidence type="ECO:0000250" key="1"/>
<evidence type="ECO:0000250" key="2">
    <source>
        <dbReference type="UniProtKB" id="Q969E2"/>
    </source>
</evidence>
<evidence type="ECO:0000255" key="3"/>
<evidence type="ECO:0000256" key="4">
    <source>
        <dbReference type="SAM" id="MobiDB-lite"/>
    </source>
</evidence>
<evidence type="ECO:0000305" key="5"/>
<reference key="1">
    <citation type="journal article" date="2001" name="Brain Res. Mol. Brain Res.">
        <title>Expression of the SCAMP-4 gene, a new member of the secretory carrier membrane protein family, is repressed by progesterone in brain regions associated with female sexual behavior.</title>
        <authorList>
            <person name="Krebs C.J."/>
            <person name="Pfaff D.W."/>
        </authorList>
    </citation>
    <scope>NUCLEOTIDE SEQUENCE [MRNA]</scope>
    <source>
        <tissue>Brain</tissue>
    </source>
</reference>
<organism>
    <name type="scientific">Rattus norvegicus</name>
    <name type="common">Rat</name>
    <dbReference type="NCBI Taxonomy" id="10116"/>
    <lineage>
        <taxon>Eukaryota</taxon>
        <taxon>Metazoa</taxon>
        <taxon>Chordata</taxon>
        <taxon>Craniata</taxon>
        <taxon>Vertebrata</taxon>
        <taxon>Euteleostomi</taxon>
        <taxon>Mammalia</taxon>
        <taxon>Eutheria</taxon>
        <taxon>Euarchontoglires</taxon>
        <taxon>Glires</taxon>
        <taxon>Rodentia</taxon>
        <taxon>Myomorpha</taxon>
        <taxon>Muroidea</taxon>
        <taxon>Muridae</taxon>
        <taxon>Murinae</taxon>
        <taxon>Rattus</taxon>
    </lineage>
</organism>
<keyword id="KW-0472">Membrane</keyword>
<keyword id="KW-0597">Phosphoprotein</keyword>
<keyword id="KW-0653">Protein transport</keyword>
<keyword id="KW-1185">Reference proteome</keyword>
<keyword id="KW-0812">Transmembrane</keyword>
<keyword id="KW-1133">Transmembrane helix</keyword>
<keyword id="KW-0813">Transport</keyword>
<sequence>MAGKENNFPPLPHFLPLKPCFYQDFSDEIPVEHQVLVKRIYRLWMFYCTTLGVNLVACLAWWIAGGAGANFGLAMLWLVLFTPCSYVCWFRPAYKAFRADSSFNFMAFFFIFGAQFVLTVIQAIGFSGWGACGWLATIGFFGTSVGAAVVMLIPAIMFSLSAVVMAITIVKVHRIYRGAGGSLQKAQTEWSAGTWRNPPSREAQFNSFSGNSLPEYPTVPSYSTSGSQWP</sequence>
<accession>Q9ET20</accession>
<comment type="function">
    <text evidence="1">Probably involved in membrane protein trafficking.</text>
</comment>
<comment type="subcellular location">
    <subcellularLocation>
        <location>Membrane</location>
        <topology>Multi-pass membrane protein</topology>
    </subcellularLocation>
</comment>
<comment type="similarity">
    <text evidence="5">Belongs to the SCAMP family.</text>
</comment>
<feature type="chain" id="PRO_0000191261" description="Secretory carrier-associated membrane protein 4">
    <location>
        <begin position="1"/>
        <end position="230"/>
    </location>
</feature>
<feature type="topological domain" description="Cytoplasmic" evidence="3">
    <location>
        <begin position="1"/>
        <end position="39"/>
    </location>
</feature>
<feature type="transmembrane region" description="Helical" evidence="3">
    <location>
        <begin position="40"/>
        <end position="60"/>
    </location>
</feature>
<feature type="transmembrane region" description="Helical" evidence="3">
    <location>
        <begin position="61"/>
        <end position="81"/>
    </location>
</feature>
<feature type="transmembrane region" description="Helical" evidence="3">
    <location>
        <begin position="106"/>
        <end position="126"/>
    </location>
</feature>
<feature type="transmembrane region" description="Helical" evidence="3">
    <location>
        <begin position="149"/>
        <end position="169"/>
    </location>
</feature>
<feature type="topological domain" description="Cytoplasmic" evidence="3">
    <location>
        <begin position="170"/>
        <end position="230"/>
    </location>
</feature>
<feature type="region of interest" description="Disordered" evidence="4">
    <location>
        <begin position="197"/>
        <end position="230"/>
    </location>
</feature>
<feature type="compositionally biased region" description="Polar residues" evidence="4">
    <location>
        <begin position="203"/>
        <end position="212"/>
    </location>
</feature>
<feature type="compositionally biased region" description="Polar residues" evidence="4">
    <location>
        <begin position="220"/>
        <end position="230"/>
    </location>
</feature>
<feature type="modified residue" description="Phosphothreonine" evidence="2">
    <location>
        <position position="194"/>
    </location>
</feature>
<name>SCAM4_RAT</name>